<comment type="function">
    <text evidence="1">NDH-1 shuttles electrons from NADH, via FMN and iron-sulfur (Fe-S) centers, to quinones in the respiratory chain. The immediate electron acceptor for the enzyme in this species is believed to be ubiquinone. Couples the redox reaction to proton translocation (for every two electrons transferred, four hydrogen ions are translocated across the cytoplasmic membrane), and thus conserves the redox energy in a proton gradient. This subunit may bind ubiquinone.</text>
</comment>
<comment type="catalytic activity">
    <reaction evidence="1">
        <text>a quinone + NADH + 5 H(+)(in) = a quinol + NAD(+) + 4 H(+)(out)</text>
        <dbReference type="Rhea" id="RHEA:57888"/>
        <dbReference type="ChEBI" id="CHEBI:15378"/>
        <dbReference type="ChEBI" id="CHEBI:24646"/>
        <dbReference type="ChEBI" id="CHEBI:57540"/>
        <dbReference type="ChEBI" id="CHEBI:57945"/>
        <dbReference type="ChEBI" id="CHEBI:132124"/>
    </reaction>
</comment>
<comment type="subunit">
    <text evidence="1">NDH-1 is composed of 14 different subunits. Subunits NuoA, H, J, K, L, M, N constitute the membrane sector of the complex.</text>
</comment>
<comment type="subcellular location">
    <subcellularLocation>
        <location evidence="1">Cell inner membrane</location>
        <topology evidence="1">Multi-pass membrane protein</topology>
    </subcellularLocation>
</comment>
<comment type="similarity">
    <text evidence="1">Belongs to the complex I subunit 1 family.</text>
</comment>
<protein>
    <recommendedName>
        <fullName evidence="1">NADH-quinone oxidoreductase subunit H</fullName>
        <ecNumber evidence="1">7.1.1.-</ecNumber>
    </recommendedName>
    <alternativeName>
        <fullName evidence="1">NADH dehydrogenase I subunit H</fullName>
    </alternativeName>
    <alternativeName>
        <fullName evidence="1">NDH-1 subunit H</fullName>
    </alternativeName>
</protein>
<sequence length="354" mass="39445">MIDWITSQGHAIFGGAWTPLWILIRAVLIVVPLLLCVAYLILWERKLIGWMHVRLGPNRVGPLGLLQPIADVLKLLLKEVMTPTHVSKGMYLIAPLMVLMPAVAIWAVIPFQAEVVMADVNAGLLYVMAISSVGVYGVILAGWASNSKYAFLGGMRAAAQMVSYEIAMGFALVTVLMVSGSLNLSAIVNSQNTGYFANMGINVLSWNWIPLLPMFGVYFISGVAETNRHPFDVVEGESEIVAGHMIEYSGMAFALFFLAEYINMIIISTITALLFLGGWAPPFSSFVTNAIPGFFWLLIKVFLLLSVFIWIRASFPRYRYDQIMRLGWKVFIPLTVGWLIIVAIWIKSPWNIWH</sequence>
<feature type="chain" id="PRO_0000244933" description="NADH-quinone oxidoreductase subunit H">
    <location>
        <begin position="1"/>
        <end position="354"/>
    </location>
</feature>
<feature type="transmembrane region" description="Helical" evidence="1">
    <location>
        <begin position="22"/>
        <end position="42"/>
    </location>
</feature>
<feature type="transmembrane region" description="Helical" evidence="1">
    <location>
        <begin position="91"/>
        <end position="111"/>
    </location>
</feature>
<feature type="transmembrane region" description="Helical" evidence="1">
    <location>
        <begin position="124"/>
        <end position="144"/>
    </location>
</feature>
<feature type="transmembrane region" description="Helical" evidence="1">
    <location>
        <begin position="168"/>
        <end position="188"/>
    </location>
</feature>
<feature type="transmembrane region" description="Helical" evidence="1">
    <location>
        <begin position="203"/>
        <end position="223"/>
    </location>
</feature>
<feature type="transmembrane region" description="Helical" evidence="1">
    <location>
        <begin position="255"/>
        <end position="275"/>
    </location>
</feature>
<feature type="transmembrane region" description="Helical" evidence="1">
    <location>
        <begin position="291"/>
        <end position="311"/>
    </location>
</feature>
<feature type="transmembrane region" description="Helical" evidence="1">
    <location>
        <begin position="326"/>
        <end position="346"/>
    </location>
</feature>
<keyword id="KW-0997">Cell inner membrane</keyword>
<keyword id="KW-1003">Cell membrane</keyword>
<keyword id="KW-0472">Membrane</keyword>
<keyword id="KW-0520">NAD</keyword>
<keyword id="KW-0874">Quinone</keyword>
<keyword id="KW-1278">Translocase</keyword>
<keyword id="KW-0812">Transmembrane</keyword>
<keyword id="KW-1133">Transmembrane helix</keyword>
<keyword id="KW-0830">Ubiquinone</keyword>
<reference key="1">
    <citation type="journal article" date="2010" name="PLoS ONE">
        <title>The complete multipartite genome sequence of Cupriavidus necator JMP134, a versatile pollutant degrader.</title>
        <authorList>
            <person name="Lykidis A."/>
            <person name="Perez-Pantoja D."/>
            <person name="Ledger T."/>
            <person name="Mavromatis K."/>
            <person name="Anderson I.J."/>
            <person name="Ivanova N.N."/>
            <person name="Hooper S.D."/>
            <person name="Lapidus A."/>
            <person name="Lucas S."/>
            <person name="Gonzalez B."/>
            <person name="Kyrpides N.C."/>
        </authorList>
    </citation>
    <scope>NUCLEOTIDE SEQUENCE [LARGE SCALE GENOMIC DNA]</scope>
    <source>
        <strain>JMP134 / LMG 1197</strain>
    </source>
</reference>
<proteinExistence type="inferred from homology"/>
<name>NUOH_CUPPJ</name>
<dbReference type="EC" id="7.1.1.-" evidence="1"/>
<dbReference type="EMBL" id="CP000090">
    <property type="protein sequence ID" value="AAZ60347.1"/>
    <property type="molecule type" value="Genomic_DNA"/>
</dbReference>
<dbReference type="SMR" id="Q473T6"/>
<dbReference type="STRING" id="264198.Reut_A0968"/>
<dbReference type="KEGG" id="reu:Reut_A0968"/>
<dbReference type="eggNOG" id="COG1005">
    <property type="taxonomic scope" value="Bacteria"/>
</dbReference>
<dbReference type="HOGENOM" id="CLU_015134_0_1_4"/>
<dbReference type="OrthoDB" id="9803734at2"/>
<dbReference type="GO" id="GO:0005886">
    <property type="term" value="C:plasma membrane"/>
    <property type="evidence" value="ECO:0007669"/>
    <property type="project" value="UniProtKB-SubCell"/>
</dbReference>
<dbReference type="GO" id="GO:0003954">
    <property type="term" value="F:NADH dehydrogenase activity"/>
    <property type="evidence" value="ECO:0007669"/>
    <property type="project" value="TreeGrafter"/>
</dbReference>
<dbReference type="GO" id="GO:0016655">
    <property type="term" value="F:oxidoreductase activity, acting on NAD(P)H, quinone or similar compound as acceptor"/>
    <property type="evidence" value="ECO:0007669"/>
    <property type="project" value="UniProtKB-UniRule"/>
</dbReference>
<dbReference type="GO" id="GO:0048038">
    <property type="term" value="F:quinone binding"/>
    <property type="evidence" value="ECO:0007669"/>
    <property type="project" value="UniProtKB-KW"/>
</dbReference>
<dbReference type="GO" id="GO:0009060">
    <property type="term" value="P:aerobic respiration"/>
    <property type="evidence" value="ECO:0007669"/>
    <property type="project" value="TreeGrafter"/>
</dbReference>
<dbReference type="HAMAP" id="MF_01350">
    <property type="entry name" value="NDH1_NuoH"/>
    <property type="match status" value="1"/>
</dbReference>
<dbReference type="InterPro" id="IPR001694">
    <property type="entry name" value="NADH_UbQ_OxRdtase_su1/FPO"/>
</dbReference>
<dbReference type="InterPro" id="IPR018086">
    <property type="entry name" value="NADH_UbQ_OxRdtase_su1_CS"/>
</dbReference>
<dbReference type="NCBIfam" id="NF004741">
    <property type="entry name" value="PRK06076.1-2"/>
    <property type="match status" value="1"/>
</dbReference>
<dbReference type="NCBIfam" id="NF004742">
    <property type="entry name" value="PRK06076.1-3"/>
    <property type="match status" value="1"/>
</dbReference>
<dbReference type="PANTHER" id="PTHR11432">
    <property type="entry name" value="NADH DEHYDROGENASE SUBUNIT 1"/>
    <property type="match status" value="1"/>
</dbReference>
<dbReference type="PANTHER" id="PTHR11432:SF3">
    <property type="entry name" value="NADH-UBIQUINONE OXIDOREDUCTASE CHAIN 1"/>
    <property type="match status" value="1"/>
</dbReference>
<dbReference type="Pfam" id="PF00146">
    <property type="entry name" value="NADHdh"/>
    <property type="match status" value="1"/>
</dbReference>
<dbReference type="PROSITE" id="PS00668">
    <property type="entry name" value="COMPLEX1_ND1_2"/>
    <property type="match status" value="1"/>
</dbReference>
<gene>
    <name evidence="1" type="primary">nuoH</name>
    <name type="ordered locus">Reut_A0968</name>
</gene>
<evidence type="ECO:0000255" key="1">
    <source>
        <dbReference type="HAMAP-Rule" id="MF_01350"/>
    </source>
</evidence>
<organism>
    <name type="scientific">Cupriavidus pinatubonensis (strain JMP 134 / LMG 1197)</name>
    <name type="common">Cupriavidus necator (strain JMP 134)</name>
    <dbReference type="NCBI Taxonomy" id="264198"/>
    <lineage>
        <taxon>Bacteria</taxon>
        <taxon>Pseudomonadati</taxon>
        <taxon>Pseudomonadota</taxon>
        <taxon>Betaproteobacteria</taxon>
        <taxon>Burkholderiales</taxon>
        <taxon>Burkholderiaceae</taxon>
        <taxon>Cupriavidus</taxon>
    </lineage>
</organism>
<accession>Q473T6</accession>